<accession>Q9N2W7</accession>
<feature type="chain" id="PRO_0000118847" description="Probable NADH dehydrogenase [ubiquinone] 1 alpha subcomplex subunit 12">
    <location>
        <begin position="1"/>
        <end position="146"/>
    </location>
</feature>
<name>NDUAC_CAEEL</name>
<organism>
    <name type="scientific">Caenorhabditis elegans</name>
    <dbReference type="NCBI Taxonomy" id="6239"/>
    <lineage>
        <taxon>Eukaryota</taxon>
        <taxon>Metazoa</taxon>
        <taxon>Ecdysozoa</taxon>
        <taxon>Nematoda</taxon>
        <taxon>Chromadorea</taxon>
        <taxon>Rhabditida</taxon>
        <taxon>Rhabditina</taxon>
        <taxon>Rhabditomorpha</taxon>
        <taxon>Rhabditoidea</taxon>
        <taxon>Rhabditidae</taxon>
        <taxon>Peloderinae</taxon>
        <taxon>Caenorhabditis</taxon>
    </lineage>
</organism>
<evidence type="ECO:0000250" key="1"/>
<evidence type="ECO:0000305" key="2"/>
<evidence type="ECO:0000312" key="3">
    <source>
        <dbReference type="WormBase" id="Y94H6A.8"/>
    </source>
</evidence>
<keyword id="KW-0249">Electron transport</keyword>
<keyword id="KW-0472">Membrane</keyword>
<keyword id="KW-0496">Mitochondrion</keyword>
<keyword id="KW-0999">Mitochondrion inner membrane</keyword>
<keyword id="KW-1185">Reference proteome</keyword>
<keyword id="KW-0679">Respiratory chain</keyword>
<keyword id="KW-0813">Transport</keyword>
<gene>
    <name evidence="3" type="primary">ndua-12</name>
    <name type="ORF">Y94H6A.8</name>
</gene>
<proteinExistence type="inferred from homology"/>
<comment type="function">
    <text evidence="1">Accessory subunit of the mitochondrial membrane respiratory chain NADH dehydrogenase (Complex I), that is believed not to be involved in catalysis. Complex I functions in the transfer of electrons from NADH to the respiratory chain. The immediate electron acceptor for the enzyme is believed to be ubiquinone (By similarity).</text>
</comment>
<comment type="subunit">
    <text evidence="1">Complex I is composed of 45 different subunits.</text>
</comment>
<comment type="subcellular location">
    <subcellularLocation>
        <location evidence="1">Mitochondrion inner membrane</location>
        <topology evidence="1">Peripheral membrane protein</topology>
        <orientation evidence="1">Matrix side</orientation>
    </subcellularLocation>
</comment>
<comment type="similarity">
    <text evidence="2">Belongs to the complex I NDUFA12 subunit family.</text>
</comment>
<protein>
    <recommendedName>
        <fullName>Probable NADH dehydrogenase [ubiquinone] 1 alpha subcomplex subunit 12</fullName>
    </recommendedName>
    <alternativeName>
        <fullName>NADH-ubiquinone oxidoreductase 17.0 kDa subunit</fullName>
    </alternativeName>
</protein>
<sequence>MSLKAWLGIDKIQKFGQMVKEIGGVKAVLKKRYLMDATRVGTLVGSDNFGNRYYENNAYFVPRNRWVEFPDKVWLDYDATQVPPEWHSWLHHITDDAPSVKPPPTQDWVLEHKENTSIYADKKYVPYSTTRTKIQGWQPGEKPQFD</sequence>
<reference key="1">
    <citation type="journal article" date="1998" name="Science">
        <title>Genome sequence of the nematode C. elegans: a platform for investigating biology.</title>
        <authorList>
            <consortium name="The C. elegans sequencing consortium"/>
        </authorList>
    </citation>
    <scope>NUCLEOTIDE SEQUENCE [LARGE SCALE GENOMIC DNA]</scope>
    <source>
        <strain>Bristol N2</strain>
    </source>
</reference>
<dbReference type="EMBL" id="FO081810">
    <property type="protein sequence ID" value="CCD74208.1"/>
    <property type="molecule type" value="Genomic_DNA"/>
</dbReference>
<dbReference type="RefSeq" id="NP_500247.2">
    <property type="nucleotide sequence ID" value="NM_067846.7"/>
</dbReference>
<dbReference type="SMR" id="Q9N2W7"/>
<dbReference type="BioGRID" id="42202">
    <property type="interactions" value="59"/>
</dbReference>
<dbReference type="FunCoup" id="Q9N2W7">
    <property type="interactions" value="1709"/>
</dbReference>
<dbReference type="STRING" id="6239.Y94H6A.8.2"/>
<dbReference type="PaxDb" id="6239-Y94H6A.8.2"/>
<dbReference type="PeptideAtlas" id="Q9N2W7"/>
<dbReference type="EnsemblMetazoa" id="Y94H6A.8.1">
    <property type="protein sequence ID" value="Y94H6A.8.1"/>
    <property type="gene ID" value="WBGene00022380"/>
</dbReference>
<dbReference type="GeneID" id="177056"/>
<dbReference type="KEGG" id="cel:CELE_Y94H6A.8"/>
<dbReference type="UCSC" id="Y94H6A.8.1">
    <property type="organism name" value="c. elegans"/>
</dbReference>
<dbReference type="AGR" id="WB:WBGene00022380"/>
<dbReference type="CTD" id="177056"/>
<dbReference type="WormBase" id="Y94H6A.8">
    <property type="protein sequence ID" value="CE39995"/>
    <property type="gene ID" value="WBGene00022380"/>
    <property type="gene designation" value="ndua-12"/>
</dbReference>
<dbReference type="eggNOG" id="KOG3382">
    <property type="taxonomic scope" value="Eukaryota"/>
</dbReference>
<dbReference type="GeneTree" id="ENSGT00390000005848"/>
<dbReference type="HOGENOM" id="CLU_110455_1_1_1"/>
<dbReference type="InParanoid" id="Q9N2W7"/>
<dbReference type="OMA" id="WHGWIHH"/>
<dbReference type="OrthoDB" id="274641at2759"/>
<dbReference type="PhylomeDB" id="Q9N2W7"/>
<dbReference type="PRO" id="PR:Q9N2W7"/>
<dbReference type="Proteomes" id="UP000001940">
    <property type="component" value="Chromosome IV"/>
</dbReference>
<dbReference type="Bgee" id="WBGene00022380">
    <property type="expression patterns" value="Expressed in pharyngeal muscle cell (C elegans) and 4 other cell types or tissues"/>
</dbReference>
<dbReference type="GO" id="GO:0005743">
    <property type="term" value="C:mitochondrial inner membrane"/>
    <property type="evidence" value="ECO:0007669"/>
    <property type="project" value="UniProtKB-SubCell"/>
</dbReference>
<dbReference type="GO" id="GO:0005739">
    <property type="term" value="C:mitochondrion"/>
    <property type="evidence" value="ECO:0007005"/>
    <property type="project" value="WormBase"/>
</dbReference>
<dbReference type="GO" id="GO:0045271">
    <property type="term" value="C:respiratory chain complex I"/>
    <property type="evidence" value="ECO:0000318"/>
    <property type="project" value="GO_Central"/>
</dbReference>
<dbReference type="InterPro" id="IPR007763">
    <property type="entry name" value="NDUFA12"/>
</dbReference>
<dbReference type="PANTHER" id="PTHR12910:SF2">
    <property type="entry name" value="NADH DEHYDROGENASE [UBIQUINONE] 1 ALPHA SUBCOMPLEX SUBUNIT 12"/>
    <property type="match status" value="1"/>
</dbReference>
<dbReference type="PANTHER" id="PTHR12910">
    <property type="entry name" value="NADH-UBIQUINONE OXIDOREDUCTASE SUBUNIT B17.2"/>
    <property type="match status" value="1"/>
</dbReference>
<dbReference type="Pfam" id="PF05071">
    <property type="entry name" value="NDUFA12"/>
    <property type="match status" value="1"/>
</dbReference>